<reference key="1">
    <citation type="journal article" date="2006" name="PLoS Genet.">
        <title>Who ate whom? Adaptive Helicobacter genomic changes that accompanied a host jump from early humans to large felines.</title>
        <authorList>
            <person name="Eppinger M."/>
            <person name="Baar C."/>
            <person name="Linz B."/>
            <person name="Raddatz G."/>
            <person name="Lanz C."/>
            <person name="Keller H."/>
            <person name="Morelli G."/>
            <person name="Gressmann H."/>
            <person name="Achtman M."/>
            <person name="Schuster S.C."/>
        </authorList>
    </citation>
    <scope>NUCLEOTIDE SEQUENCE [LARGE SCALE GENOMIC DNA]</scope>
    <source>
        <strain>Sheeba</strain>
    </source>
</reference>
<gene>
    <name evidence="1" type="primary">acpS</name>
    <name type="ordered locus">Hac_0830</name>
</gene>
<feature type="chain" id="PRO_1000008431" description="Holo-[acyl-carrier-protein] synthase">
    <location>
        <begin position="1"/>
        <end position="115"/>
    </location>
</feature>
<feature type="binding site" evidence="1">
    <location>
        <position position="5"/>
    </location>
    <ligand>
        <name>Mg(2+)</name>
        <dbReference type="ChEBI" id="CHEBI:18420"/>
    </ligand>
</feature>
<feature type="binding site" evidence="1">
    <location>
        <position position="51"/>
    </location>
    <ligand>
        <name>Mg(2+)</name>
        <dbReference type="ChEBI" id="CHEBI:18420"/>
    </ligand>
</feature>
<proteinExistence type="inferred from homology"/>
<protein>
    <recommendedName>
        <fullName evidence="1">Holo-[acyl-carrier-protein] synthase</fullName>
        <shortName evidence="1">Holo-ACP synthase</shortName>
        <ecNumber evidence="1">2.7.8.7</ecNumber>
    </recommendedName>
    <alternativeName>
        <fullName evidence="1">4'-phosphopantetheinyl transferase AcpS</fullName>
    </alternativeName>
</protein>
<sequence length="115" mass="12649">MIGIDIVSIARVERCVKRFKMKFLERFLSPSEILLCRDKSSTIAGFFALKEACSKALQVGIGKELSFLDMCISKSPKNAPLITLSKEKMNYFNIQSLSASISHDAGFAIAVVVVS</sequence>
<name>ACPS_HELAH</name>
<organism>
    <name type="scientific">Helicobacter acinonychis (strain Sheeba)</name>
    <dbReference type="NCBI Taxonomy" id="382638"/>
    <lineage>
        <taxon>Bacteria</taxon>
        <taxon>Pseudomonadati</taxon>
        <taxon>Campylobacterota</taxon>
        <taxon>Epsilonproteobacteria</taxon>
        <taxon>Campylobacterales</taxon>
        <taxon>Helicobacteraceae</taxon>
        <taxon>Helicobacter</taxon>
    </lineage>
</organism>
<evidence type="ECO:0000255" key="1">
    <source>
        <dbReference type="HAMAP-Rule" id="MF_00101"/>
    </source>
</evidence>
<keyword id="KW-0963">Cytoplasm</keyword>
<keyword id="KW-0275">Fatty acid biosynthesis</keyword>
<keyword id="KW-0276">Fatty acid metabolism</keyword>
<keyword id="KW-0444">Lipid biosynthesis</keyword>
<keyword id="KW-0443">Lipid metabolism</keyword>
<keyword id="KW-0460">Magnesium</keyword>
<keyword id="KW-0479">Metal-binding</keyword>
<keyword id="KW-0808">Transferase</keyword>
<comment type="function">
    <text evidence="1">Transfers the 4'-phosphopantetheine moiety from coenzyme A to a Ser of acyl-carrier-protein.</text>
</comment>
<comment type="catalytic activity">
    <reaction evidence="1">
        <text>apo-[ACP] + CoA = holo-[ACP] + adenosine 3',5'-bisphosphate + H(+)</text>
        <dbReference type="Rhea" id="RHEA:12068"/>
        <dbReference type="Rhea" id="RHEA-COMP:9685"/>
        <dbReference type="Rhea" id="RHEA-COMP:9690"/>
        <dbReference type="ChEBI" id="CHEBI:15378"/>
        <dbReference type="ChEBI" id="CHEBI:29999"/>
        <dbReference type="ChEBI" id="CHEBI:57287"/>
        <dbReference type="ChEBI" id="CHEBI:58343"/>
        <dbReference type="ChEBI" id="CHEBI:64479"/>
        <dbReference type="EC" id="2.7.8.7"/>
    </reaction>
</comment>
<comment type="cofactor">
    <cofactor evidence="1">
        <name>Mg(2+)</name>
        <dbReference type="ChEBI" id="CHEBI:18420"/>
    </cofactor>
</comment>
<comment type="subcellular location">
    <subcellularLocation>
        <location evidence="1">Cytoplasm</location>
    </subcellularLocation>
</comment>
<comment type="similarity">
    <text evidence="1">Belongs to the P-Pant transferase superfamily. AcpS family.</text>
</comment>
<accession>Q17XL2</accession>
<dbReference type="EC" id="2.7.8.7" evidence="1"/>
<dbReference type="EMBL" id="AM260522">
    <property type="protein sequence ID" value="CAJ99614.1"/>
    <property type="molecule type" value="Genomic_DNA"/>
</dbReference>
<dbReference type="RefSeq" id="WP_011577727.1">
    <property type="nucleotide sequence ID" value="NC_008229.1"/>
</dbReference>
<dbReference type="SMR" id="Q17XL2"/>
<dbReference type="STRING" id="382638.Hac_0830"/>
<dbReference type="GeneID" id="31758245"/>
<dbReference type="KEGG" id="hac:Hac_0830"/>
<dbReference type="eggNOG" id="COG0736">
    <property type="taxonomic scope" value="Bacteria"/>
</dbReference>
<dbReference type="HOGENOM" id="CLU_089696_0_2_7"/>
<dbReference type="OrthoDB" id="517356at2"/>
<dbReference type="BioCyc" id="HACI382638:HAC_RS03570-MONOMER"/>
<dbReference type="Proteomes" id="UP000000775">
    <property type="component" value="Chromosome"/>
</dbReference>
<dbReference type="GO" id="GO:0005737">
    <property type="term" value="C:cytoplasm"/>
    <property type="evidence" value="ECO:0007669"/>
    <property type="project" value="UniProtKB-SubCell"/>
</dbReference>
<dbReference type="GO" id="GO:0008897">
    <property type="term" value="F:holo-[acyl-carrier-protein] synthase activity"/>
    <property type="evidence" value="ECO:0007669"/>
    <property type="project" value="UniProtKB-UniRule"/>
</dbReference>
<dbReference type="GO" id="GO:0000287">
    <property type="term" value="F:magnesium ion binding"/>
    <property type="evidence" value="ECO:0007669"/>
    <property type="project" value="UniProtKB-UniRule"/>
</dbReference>
<dbReference type="GO" id="GO:0006633">
    <property type="term" value="P:fatty acid biosynthetic process"/>
    <property type="evidence" value="ECO:0007669"/>
    <property type="project" value="UniProtKB-UniRule"/>
</dbReference>
<dbReference type="Gene3D" id="3.90.470.20">
    <property type="entry name" value="4'-phosphopantetheinyl transferase domain"/>
    <property type="match status" value="1"/>
</dbReference>
<dbReference type="HAMAP" id="MF_00101">
    <property type="entry name" value="AcpS"/>
    <property type="match status" value="1"/>
</dbReference>
<dbReference type="InterPro" id="IPR008278">
    <property type="entry name" value="4-PPantetheinyl_Trfase_dom"/>
</dbReference>
<dbReference type="InterPro" id="IPR037143">
    <property type="entry name" value="4-PPantetheinyl_Trfase_dom_sf"/>
</dbReference>
<dbReference type="InterPro" id="IPR002582">
    <property type="entry name" value="ACPS"/>
</dbReference>
<dbReference type="InterPro" id="IPR004568">
    <property type="entry name" value="Ppantetheine-prot_Trfase_dom"/>
</dbReference>
<dbReference type="NCBIfam" id="TIGR00516">
    <property type="entry name" value="acpS"/>
    <property type="match status" value="1"/>
</dbReference>
<dbReference type="NCBIfam" id="TIGR00556">
    <property type="entry name" value="pantethn_trn"/>
    <property type="match status" value="1"/>
</dbReference>
<dbReference type="Pfam" id="PF01648">
    <property type="entry name" value="ACPS"/>
    <property type="match status" value="1"/>
</dbReference>
<dbReference type="SUPFAM" id="SSF56214">
    <property type="entry name" value="4'-phosphopantetheinyl transferase"/>
    <property type="match status" value="1"/>
</dbReference>